<reference key="1">
    <citation type="journal article" date="2005" name="J. Bacteriol.">
        <title>Whole-genome sequencing of Staphylococcus haemolyticus uncovers the extreme plasticity of its genome and the evolution of human-colonizing staphylococcal species.</title>
        <authorList>
            <person name="Takeuchi F."/>
            <person name="Watanabe S."/>
            <person name="Baba T."/>
            <person name="Yuzawa H."/>
            <person name="Ito T."/>
            <person name="Morimoto Y."/>
            <person name="Kuroda M."/>
            <person name="Cui L."/>
            <person name="Takahashi M."/>
            <person name="Ankai A."/>
            <person name="Baba S."/>
            <person name="Fukui S."/>
            <person name="Lee J.C."/>
            <person name="Hiramatsu K."/>
        </authorList>
    </citation>
    <scope>NUCLEOTIDE SEQUENCE [LARGE SCALE GENOMIC DNA]</scope>
    <source>
        <strain>JCSC1435</strain>
    </source>
</reference>
<comment type="function">
    <text evidence="1">The glycine cleavage system catalyzes the degradation of glycine. The P protein binds the alpha-amino group of glycine through its pyridoxal phosphate cofactor; CO(2) is released and the remaining methylamine moiety is then transferred to the lipoamide cofactor of the H protein.</text>
</comment>
<comment type="catalytic activity">
    <reaction evidence="1">
        <text>N(6)-[(R)-lipoyl]-L-lysyl-[glycine-cleavage complex H protein] + glycine + H(+) = N(6)-[(R)-S(8)-aminomethyldihydrolipoyl]-L-lysyl-[glycine-cleavage complex H protein] + CO2</text>
        <dbReference type="Rhea" id="RHEA:24304"/>
        <dbReference type="Rhea" id="RHEA-COMP:10494"/>
        <dbReference type="Rhea" id="RHEA-COMP:10495"/>
        <dbReference type="ChEBI" id="CHEBI:15378"/>
        <dbReference type="ChEBI" id="CHEBI:16526"/>
        <dbReference type="ChEBI" id="CHEBI:57305"/>
        <dbReference type="ChEBI" id="CHEBI:83099"/>
        <dbReference type="ChEBI" id="CHEBI:83143"/>
        <dbReference type="EC" id="1.4.4.2"/>
    </reaction>
</comment>
<comment type="cofactor">
    <cofactor evidence="1">
        <name>pyridoxal 5'-phosphate</name>
        <dbReference type="ChEBI" id="CHEBI:597326"/>
    </cofactor>
</comment>
<comment type="subunit">
    <text evidence="1">The glycine cleavage system is composed of four proteins: P, T, L and H. In this organism, the P 'protein' is a heterodimer of two subunits.</text>
</comment>
<comment type="similarity">
    <text evidence="1">Belongs to the GcvP family. C-terminal subunit subfamily.</text>
</comment>
<proteinExistence type="inferred from homology"/>
<sequence>MVVSKSSPLIFERSREGRYAYSLPQSDIKTDSVESILDDKFIRKNKAEFPEVAELDLVRHYTELSNKNFGVDSGFYPLGSCTMKYNPKINEKVARIPGFAESHPLQEEGQVQGSLEIVYSLQEELKEITGMDEVTLQPAAGAHGEWTALMIFKAYHLDNGEGHRDEVIVPDSAHGTNPASASFAGFKAVTVKSNERGEVDIEDLKRVVNENTAAIMLTNPNTLGIFEKNIMEIREIVHEAGGLLYYDGANLNAIMDKVRPGDMGFDAVHLNLHKTFTGPHGGGGPGSGPVGVKKELASYLPKPMVIKDGDTFKYDNDIKNSIGRVKPFYGNFGIYLRAYTYIRTMGAEGLREVSEAAVLNANYIKASLKDHYEIPYEQYCKHEFVLSGSKQKEHGVRTLDMAKRLLDFGVHPPTIYFPLNVEEGMMIEPTETESKETLDYFIDAMIQIAEEAKNDPDKVLEAPHSTIIDRLDETTAARKPVLKFDNLHEEKE</sequence>
<feature type="chain" id="PRO_0000167019" description="Probable glycine dehydrogenase (decarboxylating) subunit 2">
    <location>
        <begin position="1"/>
        <end position="492"/>
    </location>
</feature>
<feature type="modified residue" description="N6-(pyridoxal phosphate)lysine" evidence="1">
    <location>
        <position position="274"/>
    </location>
</feature>
<evidence type="ECO:0000255" key="1">
    <source>
        <dbReference type="HAMAP-Rule" id="MF_00713"/>
    </source>
</evidence>
<gene>
    <name evidence="1" type="primary">gcvPB</name>
    <name type="ordered locus">SH1381</name>
</gene>
<name>GCSPB_STAHJ</name>
<dbReference type="EC" id="1.4.4.2" evidence="1"/>
<dbReference type="EMBL" id="AP006716">
    <property type="protein sequence ID" value="BAE04690.1"/>
    <property type="molecule type" value="Genomic_DNA"/>
</dbReference>
<dbReference type="RefSeq" id="WP_011275677.1">
    <property type="nucleotide sequence ID" value="NC_007168.1"/>
</dbReference>
<dbReference type="SMR" id="Q4L6N5"/>
<dbReference type="KEGG" id="sha:SH1381"/>
<dbReference type="eggNOG" id="COG1003">
    <property type="taxonomic scope" value="Bacteria"/>
</dbReference>
<dbReference type="HOGENOM" id="CLU_004620_5_0_9"/>
<dbReference type="OrthoDB" id="9801272at2"/>
<dbReference type="Proteomes" id="UP000000543">
    <property type="component" value="Chromosome"/>
</dbReference>
<dbReference type="GO" id="GO:0005829">
    <property type="term" value="C:cytosol"/>
    <property type="evidence" value="ECO:0007669"/>
    <property type="project" value="TreeGrafter"/>
</dbReference>
<dbReference type="GO" id="GO:0005960">
    <property type="term" value="C:glycine cleavage complex"/>
    <property type="evidence" value="ECO:0007669"/>
    <property type="project" value="TreeGrafter"/>
</dbReference>
<dbReference type="GO" id="GO:0016594">
    <property type="term" value="F:glycine binding"/>
    <property type="evidence" value="ECO:0007669"/>
    <property type="project" value="TreeGrafter"/>
</dbReference>
<dbReference type="GO" id="GO:0004375">
    <property type="term" value="F:glycine dehydrogenase (decarboxylating) activity"/>
    <property type="evidence" value="ECO:0007669"/>
    <property type="project" value="UniProtKB-EC"/>
</dbReference>
<dbReference type="GO" id="GO:0030170">
    <property type="term" value="F:pyridoxal phosphate binding"/>
    <property type="evidence" value="ECO:0007669"/>
    <property type="project" value="TreeGrafter"/>
</dbReference>
<dbReference type="GO" id="GO:0019464">
    <property type="term" value="P:glycine decarboxylation via glycine cleavage system"/>
    <property type="evidence" value="ECO:0007669"/>
    <property type="project" value="UniProtKB-UniRule"/>
</dbReference>
<dbReference type="CDD" id="cd00613">
    <property type="entry name" value="GDC-P"/>
    <property type="match status" value="1"/>
</dbReference>
<dbReference type="FunFam" id="3.40.640.10:FF:000034">
    <property type="entry name" value="Probable glycine dehydrogenase (decarboxylating) subunit 2"/>
    <property type="match status" value="1"/>
</dbReference>
<dbReference type="FunFam" id="3.90.1150.10:FF:000014">
    <property type="entry name" value="Probable glycine dehydrogenase (decarboxylating) subunit 2"/>
    <property type="match status" value="1"/>
</dbReference>
<dbReference type="Gene3D" id="6.20.440.10">
    <property type="match status" value="1"/>
</dbReference>
<dbReference type="Gene3D" id="3.90.1150.10">
    <property type="entry name" value="Aspartate Aminotransferase, domain 1"/>
    <property type="match status" value="1"/>
</dbReference>
<dbReference type="Gene3D" id="3.40.640.10">
    <property type="entry name" value="Type I PLP-dependent aspartate aminotransferase-like (Major domain)"/>
    <property type="match status" value="1"/>
</dbReference>
<dbReference type="HAMAP" id="MF_00713">
    <property type="entry name" value="GcvPB"/>
    <property type="match status" value="1"/>
</dbReference>
<dbReference type="InterPro" id="IPR000192">
    <property type="entry name" value="Aminotrans_V_dom"/>
</dbReference>
<dbReference type="InterPro" id="IPR023012">
    <property type="entry name" value="GcvPB"/>
</dbReference>
<dbReference type="InterPro" id="IPR049316">
    <property type="entry name" value="GDC-P_C"/>
</dbReference>
<dbReference type="InterPro" id="IPR020581">
    <property type="entry name" value="GDC_P"/>
</dbReference>
<dbReference type="InterPro" id="IPR015424">
    <property type="entry name" value="PyrdxlP-dep_Trfase"/>
</dbReference>
<dbReference type="InterPro" id="IPR015421">
    <property type="entry name" value="PyrdxlP-dep_Trfase_major"/>
</dbReference>
<dbReference type="InterPro" id="IPR015422">
    <property type="entry name" value="PyrdxlP-dep_Trfase_small"/>
</dbReference>
<dbReference type="NCBIfam" id="NF003346">
    <property type="entry name" value="PRK04366.1"/>
    <property type="match status" value="1"/>
</dbReference>
<dbReference type="PANTHER" id="PTHR11773:SF1">
    <property type="entry name" value="GLYCINE DEHYDROGENASE (DECARBOXYLATING), MITOCHONDRIAL"/>
    <property type="match status" value="1"/>
</dbReference>
<dbReference type="PANTHER" id="PTHR11773">
    <property type="entry name" value="GLYCINE DEHYDROGENASE, DECARBOXYLATING"/>
    <property type="match status" value="1"/>
</dbReference>
<dbReference type="Pfam" id="PF00266">
    <property type="entry name" value="Aminotran_5"/>
    <property type="match status" value="1"/>
</dbReference>
<dbReference type="Pfam" id="PF21478">
    <property type="entry name" value="GcvP2_C"/>
    <property type="match status" value="1"/>
</dbReference>
<dbReference type="SUPFAM" id="SSF53383">
    <property type="entry name" value="PLP-dependent transferases"/>
    <property type="match status" value="1"/>
</dbReference>
<organism>
    <name type="scientific">Staphylococcus haemolyticus (strain JCSC1435)</name>
    <dbReference type="NCBI Taxonomy" id="279808"/>
    <lineage>
        <taxon>Bacteria</taxon>
        <taxon>Bacillati</taxon>
        <taxon>Bacillota</taxon>
        <taxon>Bacilli</taxon>
        <taxon>Bacillales</taxon>
        <taxon>Staphylococcaceae</taxon>
        <taxon>Staphylococcus</taxon>
    </lineage>
</organism>
<accession>Q4L6N5</accession>
<keyword id="KW-0560">Oxidoreductase</keyword>
<keyword id="KW-0663">Pyridoxal phosphate</keyword>
<protein>
    <recommendedName>
        <fullName evidence="1">Probable glycine dehydrogenase (decarboxylating) subunit 2</fullName>
        <ecNumber evidence="1">1.4.4.2</ecNumber>
    </recommendedName>
    <alternativeName>
        <fullName evidence="1">Glycine cleavage system P-protein subunit 2</fullName>
    </alternativeName>
    <alternativeName>
        <fullName evidence="1">Glycine decarboxylase subunit 2</fullName>
    </alternativeName>
    <alternativeName>
        <fullName evidence="1">Glycine dehydrogenase (aminomethyl-transferring) subunit 2</fullName>
    </alternativeName>
</protein>